<proteinExistence type="evidence at protein level"/>
<protein>
    <recommendedName>
        <fullName evidence="7">ATP synthase peripheral stalk subunit d, mitochondrial</fullName>
        <shortName>ATPase subunit d</shortName>
    </recommendedName>
    <alternativeName>
        <fullName evidence="7">ATP synthase peripheral stalk subunit d</fullName>
    </alternativeName>
</protein>
<feature type="initiator methionine" description="Removed" evidence="22">
    <location>
        <position position="1"/>
    </location>
</feature>
<feature type="chain" id="PRO_0000071673" description="ATP synthase peripheral stalk subunit d, mitochondrial">
    <location>
        <begin position="2"/>
        <end position="161"/>
    </location>
</feature>
<feature type="modified residue" description="N-acetylalanine" evidence="22">
    <location>
        <position position="2"/>
    </location>
</feature>
<feature type="modified residue" description="N6-acetyllysine" evidence="3">
    <location>
        <position position="32"/>
    </location>
</feature>
<feature type="modified residue" description="N6-acetyllysine" evidence="3">
    <location>
        <position position="63"/>
    </location>
</feature>
<feature type="modified residue" description="N6-acetyllysine" evidence="3">
    <location>
        <position position="72"/>
    </location>
</feature>
<feature type="modified residue" description="N6-acetyllysine; alternate" evidence="3">
    <location>
        <position position="78"/>
    </location>
</feature>
<feature type="modified residue" description="N6-succinyllysine; alternate" evidence="3">
    <location>
        <position position="78"/>
    </location>
</feature>
<feature type="modified residue" description="N6-acetyllysine; alternate" evidence="21">
    <location>
        <position position="85"/>
    </location>
</feature>
<feature type="modified residue" description="N6-succinyllysine; alternate" evidence="3">
    <location>
        <position position="85"/>
    </location>
</feature>
<feature type="modified residue" description="N6-acetyllysine; alternate" evidence="21">
    <location>
        <position position="95"/>
    </location>
</feature>
<feature type="modified residue" description="N6-succinyllysine; alternate" evidence="3">
    <location>
        <position position="95"/>
    </location>
</feature>
<feature type="modified residue" description="N6-acetyllysine" evidence="21">
    <location>
        <position position="117"/>
    </location>
</feature>
<feature type="modified residue" description="N6-acetyllysine; alternate" evidence="3">
    <location>
        <position position="144"/>
    </location>
</feature>
<feature type="modified residue" description="N6-succinyllysine; alternate" evidence="3">
    <location>
        <position position="144"/>
    </location>
</feature>
<feature type="modified residue" description="N6-acetyllysine; alternate" evidence="21">
    <location>
        <position position="149"/>
    </location>
</feature>
<feature type="modified residue" description="N6-succinyllysine; alternate" evidence="3">
    <location>
        <position position="149"/>
    </location>
</feature>
<feature type="splice variant" id="VSP_000436" description="In isoform 2." evidence="5 6">
    <location>
        <begin position="74"/>
        <end position="97"/>
    </location>
</feature>
<feature type="helix" evidence="23">
    <location>
        <begin position="14"/>
        <end position="18"/>
    </location>
</feature>
<feature type="helix" evidence="24">
    <location>
        <begin position="22"/>
        <end position="24"/>
    </location>
</feature>
<feature type="helix" evidence="23">
    <location>
        <begin position="25"/>
        <end position="43"/>
    </location>
</feature>
<feature type="helix" evidence="23">
    <location>
        <begin position="55"/>
        <end position="58"/>
    </location>
</feature>
<feature type="strand" evidence="23">
    <location>
        <begin position="63"/>
        <end position="65"/>
    </location>
</feature>
<feature type="helix" evidence="23">
    <location>
        <begin position="66"/>
        <end position="75"/>
    </location>
</feature>
<feature type="helix" evidence="23">
    <location>
        <begin position="87"/>
        <end position="123"/>
    </location>
</feature>
<feature type="helix" evidence="23">
    <location>
        <begin position="128"/>
        <end position="130"/>
    </location>
</feature>
<feature type="helix" evidence="23">
    <location>
        <begin position="133"/>
        <end position="139"/>
    </location>
</feature>
<feature type="helix" evidence="23">
    <location>
        <begin position="141"/>
        <end position="143"/>
    </location>
</feature>
<feature type="turn" evidence="23">
    <location>
        <begin position="147"/>
        <end position="149"/>
    </location>
</feature>
<feature type="turn" evidence="23">
    <location>
        <begin position="158"/>
        <end position="160"/>
    </location>
</feature>
<comment type="function">
    <text evidence="1 2 4 8">Subunit d, of the mitochondrial membrane ATP synthase complex (F(1)F(0) ATP synthase or Complex V) that produces ATP from ADP in the presence of a proton gradient across the membrane which is generated by electron transport complexes of the respiratory chain (PubMed:37244256). ATP synthase complex consist of a soluble F(1) head domain - the catalytic core - and a membrane F(1) domain - the membrane proton channel (PubMed:37244256). These two domains are linked by a central stalk rotating inside the F(1) region and a stationary peripheral stalk (PubMed:37244256). During catalysis, ATP synthesis in the catalytic domain of F(1) is coupled via a rotary mechanism of the central stalk subunits to proton translocation (Probable). In vivo, can only synthesize ATP although its ATP hydrolase activity can be activated artificially in vitro (By similarity). Part of the complex F(0) domain (PubMed:37244256). Part of the complex F(0) domain and the peripheric stalk, which acts as a stator to hold the catalytic alpha(3)beta(3) subcomplex and subunit a/ATP6 static relative to the rotary elements (By similarity).</text>
</comment>
<comment type="subunit">
    <text evidence="3 4">Component of the ATP synthase complex composed at least of ATP5F1A/subunit alpha, ATP5F1B/subunit beta, ATP5MC1/subunit c (homooctomer), MT-ATP6/subunit a, MT-ATP8/subunit 8, ATP5ME/subunit e, ATP5MF/subunit f, ATP5MG/subunit g, ATP5MK/subunit k, ATP5MJ/subunit j, ATP5F1C/subunit gamma, ATP5F1D/subunit delta, ATP5F1E/subunit epsilon, ATP5PF/subunit F6, ATP5PB/subunit b, ATP5PD/subunit d, ATP5PO/subunit OSCP (PubMed:37244256). ATP synthase complex consists of a soluble F(1) head domain (subunits alpha(3) and beta(3)) - the catalytic core - and a membrane F(0) domain - the membrane proton channel (subunits c, a, 8, e, f, g, k and j) (PubMed:37244256). These two domains are linked by a central stalk (subunits gamma, delta, and epsilon) rotating inside the F1 region and a stationary peripheral stalk (subunits F6, b, d, and OSCP) (PubMed:37244256). Interacts with FLVCR2; this interaction occurs in the absence of heme and is disrupted upon heme binding (By similarity).</text>
</comment>
<comment type="interaction">
    <interactant intactId="EBI-724024">
        <id>O75947</id>
    </interactant>
    <interactant intactId="EBI-356231">
        <id>P06576</id>
        <label>ATP5F1B</label>
    </interactant>
    <organismsDiffer>false</organismsDiffer>
    <experiments>2</experiments>
</comment>
<comment type="interaction">
    <interactant intactId="EBI-724024">
        <id>O75947</id>
    </interactant>
    <interactant intactId="EBI-1044810">
        <id>P24539</id>
        <label>ATP5PB</label>
    </interactant>
    <organismsDiffer>false</organismsDiffer>
    <experiments>5</experiments>
</comment>
<comment type="interaction">
    <interactant intactId="EBI-724024">
        <id>O75947</id>
    </interactant>
    <interactant intactId="EBI-2606700">
        <id>P18859</id>
        <label>ATP5PF</label>
    </interactant>
    <organismsDiffer>false</organismsDiffer>
    <experiments>3</experiments>
</comment>
<comment type="subcellular location">
    <subcellularLocation>
        <location>Mitochondrion</location>
    </subcellularLocation>
    <subcellularLocation>
        <location>Mitochondrion inner membrane</location>
    </subcellularLocation>
</comment>
<comment type="alternative products">
    <event type="alternative splicing"/>
    <isoform>
        <id>O75947-1</id>
        <name>1</name>
        <sequence type="displayed"/>
    </isoform>
    <isoform>
        <id>O75947-2</id>
        <name>2</name>
        <sequence type="described" ref="VSP_000436"/>
    </isoform>
</comment>
<comment type="similarity">
    <text evidence="7">Belongs to the ATPase d subunit family.</text>
</comment>
<dbReference type="EMBL" id="AF087135">
    <property type="protein sequence ID" value="AAC36338.1"/>
    <property type="molecule type" value="mRNA"/>
</dbReference>
<dbReference type="EMBL" id="AF070650">
    <property type="protein sequence ID" value="AAD20956.1"/>
    <property type="molecule type" value="mRNA"/>
</dbReference>
<dbReference type="EMBL" id="AF061735">
    <property type="protein sequence ID" value="AAG43146.1"/>
    <property type="molecule type" value="mRNA"/>
</dbReference>
<dbReference type="EMBL" id="AK312230">
    <property type="protein sequence ID" value="BAG35163.1"/>
    <property type="molecule type" value="mRNA"/>
</dbReference>
<dbReference type="EMBL" id="CH471099">
    <property type="protein sequence ID" value="EAW89228.1"/>
    <property type="molecule type" value="Genomic_DNA"/>
</dbReference>
<dbReference type="EMBL" id="BC032245">
    <property type="protein sequence ID" value="AAH32245.1"/>
    <property type="molecule type" value="mRNA"/>
</dbReference>
<dbReference type="EMBL" id="BC038092">
    <property type="protein sequence ID" value="AAH38092.1"/>
    <property type="molecule type" value="mRNA"/>
</dbReference>
<dbReference type="CCDS" id="CCDS11712.1">
    <molecule id="O75947-1"/>
</dbReference>
<dbReference type="CCDS" id="CCDS32727.1">
    <molecule id="O75947-2"/>
</dbReference>
<dbReference type="RefSeq" id="NP_001003785.1">
    <molecule id="O75947-2"/>
    <property type="nucleotide sequence ID" value="NM_001003785.2"/>
</dbReference>
<dbReference type="RefSeq" id="NP_006347.1">
    <molecule id="O75947-1"/>
    <property type="nucleotide sequence ID" value="NM_006356.3"/>
</dbReference>
<dbReference type="PDB" id="8H9F">
    <property type="method" value="EM"/>
    <property type="resolution" value="2.69 A"/>
    <property type="chains" value="M=2-161"/>
</dbReference>
<dbReference type="PDB" id="8H9G">
    <property type="method" value="EM"/>
    <property type="resolution" value="2.95 A"/>
    <property type="chains" value="M=2-161"/>
</dbReference>
<dbReference type="PDB" id="8H9J">
    <property type="method" value="EM"/>
    <property type="resolution" value="3.26 A"/>
    <property type="chains" value="M=2-161"/>
</dbReference>
<dbReference type="PDB" id="8H9K">
    <property type="method" value="EM"/>
    <property type="resolution" value="3.51 A"/>
    <property type="chains" value="M=2-161"/>
</dbReference>
<dbReference type="PDB" id="8H9M">
    <property type="method" value="EM"/>
    <property type="resolution" value="3.00 A"/>
    <property type="chains" value="M=2-161"/>
</dbReference>
<dbReference type="PDB" id="8H9N">
    <property type="method" value="EM"/>
    <property type="resolution" value="3.56 A"/>
    <property type="chains" value="M=2-161"/>
</dbReference>
<dbReference type="PDB" id="8H9Q">
    <property type="method" value="EM"/>
    <property type="resolution" value="3.47 A"/>
    <property type="chains" value="M=2-161"/>
</dbReference>
<dbReference type="PDB" id="8H9R">
    <property type="method" value="EM"/>
    <property type="resolution" value="3.97 A"/>
    <property type="chains" value="M=2-161"/>
</dbReference>
<dbReference type="PDB" id="8H9S">
    <property type="method" value="EM"/>
    <property type="resolution" value="2.53 A"/>
    <property type="chains" value="M=2-161"/>
</dbReference>
<dbReference type="PDB" id="8H9T">
    <property type="method" value="EM"/>
    <property type="resolution" value="2.77 A"/>
    <property type="chains" value="M=2-161"/>
</dbReference>
<dbReference type="PDB" id="8H9U">
    <property type="method" value="EM"/>
    <property type="resolution" value="2.61 A"/>
    <property type="chains" value="M=2-161"/>
</dbReference>
<dbReference type="PDB" id="8H9V">
    <property type="method" value="EM"/>
    <property type="resolution" value="3.02 A"/>
    <property type="chains" value="M=2-161"/>
</dbReference>
<dbReference type="PDB" id="8KHF">
    <property type="method" value="EM"/>
    <property type="resolution" value="3.13 A"/>
    <property type="chains" value="M=2-161"/>
</dbReference>
<dbReference type="PDB" id="8KI3">
    <property type="method" value="EM"/>
    <property type="resolution" value="2.89 A"/>
    <property type="chains" value="M=2-161"/>
</dbReference>
<dbReference type="PDBsum" id="8H9F"/>
<dbReference type="PDBsum" id="8H9G"/>
<dbReference type="PDBsum" id="8H9J"/>
<dbReference type="PDBsum" id="8H9K"/>
<dbReference type="PDBsum" id="8H9M"/>
<dbReference type="PDBsum" id="8H9N"/>
<dbReference type="PDBsum" id="8H9Q"/>
<dbReference type="PDBsum" id="8H9R"/>
<dbReference type="PDBsum" id="8H9S"/>
<dbReference type="PDBsum" id="8H9T"/>
<dbReference type="PDBsum" id="8H9U"/>
<dbReference type="PDBsum" id="8H9V"/>
<dbReference type="PDBsum" id="8KHF"/>
<dbReference type="PDBsum" id="8KI3"/>
<dbReference type="EMDB" id="EMD-34565"/>
<dbReference type="EMDB" id="EMD-34566"/>
<dbReference type="EMDB" id="EMD-34569"/>
<dbReference type="EMDB" id="EMD-34570"/>
<dbReference type="EMDB" id="EMD-34573"/>
<dbReference type="EMDB" id="EMD-34574"/>
<dbReference type="EMDB" id="EMD-34577"/>
<dbReference type="EMDB" id="EMD-34578"/>
<dbReference type="EMDB" id="EMD-34580"/>
<dbReference type="EMDB" id="EMD-34581"/>
<dbReference type="EMDB" id="EMD-34582"/>
<dbReference type="EMDB" id="EMD-34583"/>
<dbReference type="EMDB" id="EMD-37243"/>
<dbReference type="EMDB" id="EMD-37251"/>
<dbReference type="SMR" id="O75947"/>
<dbReference type="BioGRID" id="115739">
    <property type="interactions" value="258"/>
</dbReference>
<dbReference type="ComplexPortal" id="CPX-6151">
    <property type="entry name" value="Mitochondrial proton-transporting ATP synthase complex"/>
</dbReference>
<dbReference type="CORUM" id="O75947"/>
<dbReference type="FunCoup" id="O75947">
    <property type="interactions" value="2272"/>
</dbReference>
<dbReference type="IntAct" id="O75947">
    <property type="interactions" value="118"/>
</dbReference>
<dbReference type="MINT" id="O75947"/>
<dbReference type="STRING" id="9606.ENSP00000301587"/>
<dbReference type="TCDB" id="3.A.2.1.15">
    <property type="family name" value="the h+- or na+-translocating f-type, v-type and a-type atpase (f-atpase) superfamily"/>
</dbReference>
<dbReference type="CarbonylDB" id="O75947"/>
<dbReference type="GlyGen" id="O75947">
    <property type="glycosylation" value="1 site, 1 O-linked glycan (1 site)"/>
</dbReference>
<dbReference type="iPTMnet" id="O75947"/>
<dbReference type="MetOSite" id="O75947"/>
<dbReference type="PhosphoSitePlus" id="O75947"/>
<dbReference type="SwissPalm" id="O75947"/>
<dbReference type="BioMuta" id="ATP5H"/>
<dbReference type="OGP" id="O75947"/>
<dbReference type="REPRODUCTION-2DPAGE" id="IPI00456049"/>
<dbReference type="CPTAC" id="CPTAC-29"/>
<dbReference type="CPTAC" id="CPTAC-30"/>
<dbReference type="jPOST" id="O75947"/>
<dbReference type="MassIVE" id="O75947"/>
<dbReference type="PaxDb" id="9606-ENSP00000301587"/>
<dbReference type="PeptideAtlas" id="O75947"/>
<dbReference type="ProteomicsDB" id="50308">
    <molecule id="O75947-1"/>
</dbReference>
<dbReference type="ProteomicsDB" id="50309">
    <molecule id="O75947-2"/>
</dbReference>
<dbReference type="Pumba" id="O75947"/>
<dbReference type="TopDownProteomics" id="O75947-1">
    <molecule id="O75947-1"/>
</dbReference>
<dbReference type="TopDownProteomics" id="O75947-2">
    <molecule id="O75947-2"/>
</dbReference>
<dbReference type="Antibodypedia" id="32083">
    <property type="antibodies" value="265 antibodies from 32 providers"/>
</dbReference>
<dbReference type="DNASU" id="10476"/>
<dbReference type="Ensembl" id="ENST00000301587.9">
    <molecule id="O75947-1"/>
    <property type="protein sequence ID" value="ENSP00000301587.4"/>
    <property type="gene ID" value="ENSG00000167863.12"/>
</dbReference>
<dbReference type="Ensembl" id="ENST00000344546.8">
    <molecule id="O75947-2"/>
    <property type="protein sequence ID" value="ENSP00000344230.4"/>
    <property type="gene ID" value="ENSG00000167863.12"/>
</dbReference>
<dbReference type="GeneID" id="10476"/>
<dbReference type="KEGG" id="hsa:10476"/>
<dbReference type="MANE-Select" id="ENST00000301587.9">
    <property type="protein sequence ID" value="ENSP00000301587.4"/>
    <property type="RefSeq nucleotide sequence ID" value="NM_006356.3"/>
    <property type="RefSeq protein sequence ID" value="NP_006347.1"/>
</dbReference>
<dbReference type="UCSC" id="uc002jmn.2">
    <molecule id="O75947-1"/>
    <property type="organism name" value="human"/>
</dbReference>
<dbReference type="AGR" id="HGNC:845"/>
<dbReference type="CTD" id="10476"/>
<dbReference type="DisGeNET" id="10476"/>
<dbReference type="GeneCards" id="ATP5PD"/>
<dbReference type="HGNC" id="HGNC:845">
    <property type="gene designation" value="ATP5PD"/>
</dbReference>
<dbReference type="HPA" id="ENSG00000167863">
    <property type="expression patterns" value="Low tissue specificity"/>
</dbReference>
<dbReference type="MalaCards" id="ATP5PD"/>
<dbReference type="MIM" id="618121">
    <property type="type" value="gene"/>
</dbReference>
<dbReference type="neXtProt" id="NX_O75947"/>
<dbReference type="OpenTargets" id="ENSG00000167863"/>
<dbReference type="PharmGKB" id="PA25135"/>
<dbReference type="VEuPathDB" id="HostDB:ENSG00000167863"/>
<dbReference type="eggNOG" id="KOG3366">
    <property type="taxonomic scope" value="Eukaryota"/>
</dbReference>
<dbReference type="GeneTree" id="ENSGT00390000003582"/>
<dbReference type="HOGENOM" id="CLU_130600_0_0_1"/>
<dbReference type="InParanoid" id="O75947"/>
<dbReference type="OMA" id="VSKGRWA"/>
<dbReference type="OrthoDB" id="35799at2759"/>
<dbReference type="PAN-GO" id="O75947">
    <property type="GO annotations" value="2 GO annotations based on evolutionary models"/>
</dbReference>
<dbReference type="PhylomeDB" id="O75947"/>
<dbReference type="TreeFam" id="TF314031"/>
<dbReference type="BioCyc" id="MetaCyc:HS09654-MONOMER"/>
<dbReference type="PathwayCommons" id="O75947"/>
<dbReference type="Reactome" id="R-HSA-163210">
    <property type="pathway name" value="Formation of ATP by chemiosmotic coupling"/>
</dbReference>
<dbReference type="Reactome" id="R-HSA-8949613">
    <property type="pathway name" value="Cristae formation"/>
</dbReference>
<dbReference type="Reactome" id="R-HSA-9837999">
    <property type="pathway name" value="Mitochondrial protein degradation"/>
</dbReference>
<dbReference type="SignaLink" id="O75947"/>
<dbReference type="SIGNOR" id="O75947"/>
<dbReference type="BioGRID-ORCS" id="10476">
    <property type="hits" value="254 hits in 1148 CRISPR screens"/>
</dbReference>
<dbReference type="CD-CODE" id="FB4E32DD">
    <property type="entry name" value="Presynaptic clusters and postsynaptic densities"/>
</dbReference>
<dbReference type="ChiTaRS" id="ATP5H">
    <property type="organism name" value="human"/>
</dbReference>
<dbReference type="GeneWiki" id="ATP5H"/>
<dbReference type="GenomeRNAi" id="10476"/>
<dbReference type="Pharos" id="O75947">
    <property type="development level" value="Tbio"/>
</dbReference>
<dbReference type="PRO" id="PR:O75947"/>
<dbReference type="Proteomes" id="UP000005640">
    <property type="component" value="Chromosome 17"/>
</dbReference>
<dbReference type="RNAct" id="O75947">
    <property type="molecule type" value="protein"/>
</dbReference>
<dbReference type="Bgee" id="ENSG00000167863">
    <property type="expression patterns" value="Expressed in heart right ventricle and 214 other cell types or tissues"/>
</dbReference>
<dbReference type="ExpressionAtlas" id="O75947">
    <property type="expression patterns" value="baseline and differential"/>
</dbReference>
<dbReference type="GO" id="GO:0005743">
    <property type="term" value="C:mitochondrial inner membrane"/>
    <property type="evidence" value="ECO:0000314"/>
    <property type="project" value="UniProtKB"/>
</dbReference>
<dbReference type="GO" id="GO:0005739">
    <property type="term" value="C:mitochondrion"/>
    <property type="evidence" value="ECO:0000314"/>
    <property type="project" value="HPA"/>
</dbReference>
<dbReference type="GO" id="GO:0045259">
    <property type="term" value="C:proton-transporting ATP synthase complex"/>
    <property type="evidence" value="ECO:0000314"/>
    <property type="project" value="UniProtKB"/>
</dbReference>
<dbReference type="GO" id="GO:0015078">
    <property type="term" value="F:proton transmembrane transporter activity"/>
    <property type="evidence" value="ECO:0007669"/>
    <property type="project" value="InterPro"/>
</dbReference>
<dbReference type="GO" id="GO:0015986">
    <property type="term" value="P:proton motive force-driven ATP synthesis"/>
    <property type="evidence" value="ECO:0000318"/>
    <property type="project" value="GO_Central"/>
</dbReference>
<dbReference type="GO" id="GO:0042776">
    <property type="term" value="P:proton motive force-driven mitochondrial ATP synthesis"/>
    <property type="evidence" value="ECO:0000314"/>
    <property type="project" value="UniProtKB"/>
</dbReference>
<dbReference type="Gene3D" id="6.10.280.70">
    <property type="match status" value="1"/>
</dbReference>
<dbReference type="InterPro" id="IPR008689">
    <property type="entry name" value="ATP_synth_F0_dsu_mt"/>
</dbReference>
<dbReference type="InterPro" id="IPR036228">
    <property type="entry name" value="ATP_synth_F0_dsu_sf_mt"/>
</dbReference>
<dbReference type="PANTHER" id="PTHR12700">
    <property type="entry name" value="ATP SYNTHASE SUBUNIT D, MITOCHONDRIAL"/>
    <property type="match status" value="1"/>
</dbReference>
<dbReference type="Pfam" id="PF05873">
    <property type="entry name" value="Mt_ATP-synt_D"/>
    <property type="match status" value="1"/>
</dbReference>
<dbReference type="PIRSF" id="PIRSF005514">
    <property type="entry name" value="ATPase_F0_D_mt"/>
    <property type="match status" value="1"/>
</dbReference>
<dbReference type="SUPFAM" id="SSF161065">
    <property type="entry name" value="ATP synthase D chain-like"/>
    <property type="match status" value="1"/>
</dbReference>
<keyword id="KW-0002">3D-structure</keyword>
<keyword id="KW-0007">Acetylation</keyword>
<keyword id="KW-0025">Alternative splicing</keyword>
<keyword id="KW-0138">CF(0)</keyword>
<keyword id="KW-0903">Direct protein sequencing</keyword>
<keyword id="KW-0375">Hydrogen ion transport</keyword>
<keyword id="KW-0406">Ion transport</keyword>
<keyword id="KW-0472">Membrane</keyword>
<keyword id="KW-0496">Mitochondrion</keyword>
<keyword id="KW-0999">Mitochondrion inner membrane</keyword>
<keyword id="KW-1267">Proteomics identification</keyword>
<keyword id="KW-1185">Reference proteome</keyword>
<keyword id="KW-0813">Transport</keyword>
<evidence type="ECO:0000250" key="1">
    <source>
        <dbReference type="UniProtKB" id="P13620"/>
    </source>
</evidence>
<evidence type="ECO:0000250" key="2">
    <source>
        <dbReference type="UniProtKB" id="P19483"/>
    </source>
</evidence>
<evidence type="ECO:0000250" key="3">
    <source>
        <dbReference type="UniProtKB" id="Q9DCX2"/>
    </source>
</evidence>
<evidence type="ECO:0000269" key="4">
    <source>
    </source>
</evidence>
<evidence type="ECO:0000303" key="5">
    <source>
    </source>
</evidence>
<evidence type="ECO:0000303" key="6">
    <source ref="3"/>
</evidence>
<evidence type="ECO:0000305" key="7"/>
<evidence type="ECO:0000305" key="8">
    <source>
    </source>
</evidence>
<evidence type="ECO:0000312" key="9">
    <source>
        <dbReference type="HGNC" id="HGNC:845"/>
    </source>
</evidence>
<evidence type="ECO:0007744" key="10">
    <source>
        <dbReference type="PDB" id="8H9F"/>
    </source>
</evidence>
<evidence type="ECO:0007744" key="11">
    <source>
        <dbReference type="PDB" id="8H9G"/>
    </source>
</evidence>
<evidence type="ECO:0007744" key="12">
    <source>
        <dbReference type="PDB" id="8H9J"/>
    </source>
</evidence>
<evidence type="ECO:0007744" key="13">
    <source>
        <dbReference type="PDB" id="8H9K"/>
    </source>
</evidence>
<evidence type="ECO:0007744" key="14">
    <source>
        <dbReference type="PDB" id="8H9M"/>
    </source>
</evidence>
<evidence type="ECO:0007744" key="15">
    <source>
        <dbReference type="PDB" id="8H9N"/>
    </source>
</evidence>
<evidence type="ECO:0007744" key="16">
    <source>
        <dbReference type="PDB" id="8H9Q"/>
    </source>
</evidence>
<evidence type="ECO:0007744" key="17">
    <source>
        <dbReference type="PDB" id="8H9R"/>
    </source>
</evidence>
<evidence type="ECO:0007744" key="18">
    <source>
        <dbReference type="PDB" id="8H9S"/>
    </source>
</evidence>
<evidence type="ECO:0007744" key="19">
    <source>
        <dbReference type="PDB" id="8H9T"/>
    </source>
</evidence>
<evidence type="ECO:0007744" key="20">
    <source>
        <dbReference type="PDB" id="8H9V"/>
    </source>
</evidence>
<evidence type="ECO:0007744" key="21">
    <source>
    </source>
</evidence>
<evidence type="ECO:0007744" key="22">
    <source>
    </source>
</evidence>
<evidence type="ECO:0007829" key="23">
    <source>
        <dbReference type="PDB" id="8H9G"/>
    </source>
</evidence>
<evidence type="ECO:0007829" key="24">
    <source>
        <dbReference type="PDB" id="8H9V"/>
    </source>
</evidence>
<gene>
    <name evidence="9" type="primary">ATP5PD</name>
    <name type="synonym">ATP5H</name>
    <name type="ORF">My032</name>
</gene>
<sequence>MAGRKLALKTIDWVAFAEIIPQNQKAIASSLKSWNETLTSRLAALPENPPAIDWAYYKANVAKAGLVDDFEKKFNALKVPVPEDKYTAQVDAEEKEDVKSCAEWVSLSKARIVEYEKEMEKMKNLIPFDQMTIEDLNEAFPETKLDKKKYPYWPHQPIENL</sequence>
<organism>
    <name type="scientific">Homo sapiens</name>
    <name type="common">Human</name>
    <dbReference type="NCBI Taxonomy" id="9606"/>
    <lineage>
        <taxon>Eukaryota</taxon>
        <taxon>Metazoa</taxon>
        <taxon>Chordata</taxon>
        <taxon>Craniata</taxon>
        <taxon>Vertebrata</taxon>
        <taxon>Euteleostomi</taxon>
        <taxon>Mammalia</taxon>
        <taxon>Eutheria</taxon>
        <taxon>Euarchontoglires</taxon>
        <taxon>Primates</taxon>
        <taxon>Haplorrhini</taxon>
        <taxon>Catarrhini</taxon>
        <taxon>Hominidae</taxon>
        <taxon>Homo</taxon>
    </lineage>
</organism>
<accession>O75947</accession>
<accession>B2R5L6</accession>
<accession>Q9H3J4</accession>
<name>ATP5H_HUMAN</name>
<reference key="1">
    <citation type="submission" date="1998-08" db="EMBL/GenBank/DDBJ databases">
        <title>cDNA cloning, and chromosomal localization of a human F1F0-type ATPase subunit d.</title>
        <authorList>
            <person name="Lee H.C."/>
            <person name="Park D.S."/>
            <person name="Lee C.M."/>
            <person name="Cho W.K."/>
            <person name="Ahn H.J."/>
            <person name="Lee M.Y."/>
            <person name="Hwang M.Y."/>
            <person name="Jin S.W."/>
            <person name="Sohn U.I.K."/>
        </authorList>
    </citation>
    <scope>NUCLEOTIDE SEQUENCE [MRNA] (ISOFORM 1)</scope>
    <source>
        <tissue>Thymus</tissue>
    </source>
</reference>
<reference key="2">
    <citation type="journal article" date="2000" name="Genome Res.">
        <title>Cloning and functional analysis of cDNAs with open reading frames for 300 previously undefined genes expressed in CD34+ hematopoietic stem/progenitor cells.</title>
        <authorList>
            <person name="Zhang Q.-H."/>
            <person name="Ye M."/>
            <person name="Wu X.-Y."/>
            <person name="Ren S.-X."/>
            <person name="Zhao M."/>
            <person name="Zhao C.-J."/>
            <person name="Fu G."/>
            <person name="Shen Y."/>
            <person name="Fan H.-Y."/>
            <person name="Lu G."/>
            <person name="Zhong M."/>
            <person name="Xu X.-R."/>
            <person name="Han Z.-G."/>
            <person name="Zhang J.-W."/>
            <person name="Tao J."/>
            <person name="Huang Q.-H."/>
            <person name="Zhou J."/>
            <person name="Hu G.-X."/>
            <person name="Gu J."/>
            <person name="Chen S.-J."/>
            <person name="Chen Z."/>
        </authorList>
    </citation>
    <scope>NUCLEOTIDE SEQUENCE [LARGE SCALE MRNA] (ISOFORM 1)</scope>
    <source>
        <tissue>Umbilical cord blood</tissue>
    </source>
</reference>
<reference key="3">
    <citation type="submission" date="1998-04" db="EMBL/GenBank/DDBJ databases">
        <authorList>
            <person name="Mao Y.M."/>
            <person name="Xie Y."/>
            <person name="Ying K."/>
        </authorList>
    </citation>
    <scope>NUCLEOTIDE SEQUENCE [LARGE SCALE MRNA] (ISOFORM 2)</scope>
    <source>
        <tissue>Fetal brain</tissue>
    </source>
</reference>
<reference key="4">
    <citation type="journal article" date="2004" name="Nat. Genet.">
        <title>Complete sequencing and characterization of 21,243 full-length human cDNAs.</title>
        <authorList>
            <person name="Ota T."/>
            <person name="Suzuki Y."/>
            <person name="Nishikawa T."/>
            <person name="Otsuki T."/>
            <person name="Sugiyama T."/>
            <person name="Irie R."/>
            <person name="Wakamatsu A."/>
            <person name="Hayashi K."/>
            <person name="Sato H."/>
            <person name="Nagai K."/>
            <person name="Kimura K."/>
            <person name="Makita H."/>
            <person name="Sekine M."/>
            <person name="Obayashi M."/>
            <person name="Nishi T."/>
            <person name="Shibahara T."/>
            <person name="Tanaka T."/>
            <person name="Ishii S."/>
            <person name="Yamamoto J."/>
            <person name="Saito K."/>
            <person name="Kawai Y."/>
            <person name="Isono Y."/>
            <person name="Nakamura Y."/>
            <person name="Nagahari K."/>
            <person name="Murakami K."/>
            <person name="Yasuda T."/>
            <person name="Iwayanagi T."/>
            <person name="Wagatsuma M."/>
            <person name="Shiratori A."/>
            <person name="Sudo H."/>
            <person name="Hosoiri T."/>
            <person name="Kaku Y."/>
            <person name="Kodaira H."/>
            <person name="Kondo H."/>
            <person name="Sugawara M."/>
            <person name="Takahashi M."/>
            <person name="Kanda K."/>
            <person name="Yokoi T."/>
            <person name="Furuya T."/>
            <person name="Kikkawa E."/>
            <person name="Omura Y."/>
            <person name="Abe K."/>
            <person name="Kamihara K."/>
            <person name="Katsuta N."/>
            <person name="Sato K."/>
            <person name="Tanikawa M."/>
            <person name="Yamazaki M."/>
            <person name="Ninomiya K."/>
            <person name="Ishibashi T."/>
            <person name="Yamashita H."/>
            <person name="Murakawa K."/>
            <person name="Fujimori K."/>
            <person name="Tanai H."/>
            <person name="Kimata M."/>
            <person name="Watanabe M."/>
            <person name="Hiraoka S."/>
            <person name="Chiba Y."/>
            <person name="Ishida S."/>
            <person name="Ono Y."/>
            <person name="Takiguchi S."/>
            <person name="Watanabe S."/>
            <person name="Yosida M."/>
            <person name="Hotuta T."/>
            <person name="Kusano J."/>
            <person name="Kanehori K."/>
            <person name="Takahashi-Fujii A."/>
            <person name="Hara H."/>
            <person name="Tanase T.-O."/>
            <person name="Nomura Y."/>
            <person name="Togiya S."/>
            <person name="Komai F."/>
            <person name="Hara R."/>
            <person name="Takeuchi K."/>
            <person name="Arita M."/>
            <person name="Imose N."/>
            <person name="Musashino K."/>
            <person name="Yuuki H."/>
            <person name="Oshima A."/>
            <person name="Sasaki N."/>
            <person name="Aotsuka S."/>
            <person name="Yoshikawa Y."/>
            <person name="Matsunawa H."/>
            <person name="Ichihara T."/>
            <person name="Shiohata N."/>
            <person name="Sano S."/>
            <person name="Moriya S."/>
            <person name="Momiyama H."/>
            <person name="Satoh N."/>
            <person name="Takami S."/>
            <person name="Terashima Y."/>
            <person name="Suzuki O."/>
            <person name="Nakagawa S."/>
            <person name="Senoh A."/>
            <person name="Mizoguchi H."/>
            <person name="Goto Y."/>
            <person name="Shimizu F."/>
            <person name="Wakebe H."/>
            <person name="Hishigaki H."/>
            <person name="Watanabe T."/>
            <person name="Sugiyama A."/>
            <person name="Takemoto M."/>
            <person name="Kawakami B."/>
            <person name="Yamazaki M."/>
            <person name="Watanabe K."/>
            <person name="Kumagai A."/>
            <person name="Itakura S."/>
            <person name="Fukuzumi Y."/>
            <person name="Fujimori Y."/>
            <person name="Komiyama M."/>
            <person name="Tashiro H."/>
            <person name="Tanigami A."/>
            <person name="Fujiwara T."/>
            <person name="Ono T."/>
            <person name="Yamada K."/>
            <person name="Fujii Y."/>
            <person name="Ozaki K."/>
            <person name="Hirao M."/>
            <person name="Ohmori Y."/>
            <person name="Kawabata A."/>
            <person name="Hikiji T."/>
            <person name="Kobatake N."/>
            <person name="Inagaki H."/>
            <person name="Ikema Y."/>
            <person name="Okamoto S."/>
            <person name="Okitani R."/>
            <person name="Kawakami T."/>
            <person name="Noguchi S."/>
            <person name="Itoh T."/>
            <person name="Shigeta K."/>
            <person name="Senba T."/>
            <person name="Matsumura K."/>
            <person name="Nakajima Y."/>
            <person name="Mizuno T."/>
            <person name="Morinaga M."/>
            <person name="Sasaki M."/>
            <person name="Togashi T."/>
            <person name="Oyama M."/>
            <person name="Hata H."/>
            <person name="Watanabe M."/>
            <person name="Komatsu T."/>
            <person name="Mizushima-Sugano J."/>
            <person name="Satoh T."/>
            <person name="Shirai Y."/>
            <person name="Takahashi Y."/>
            <person name="Nakagawa K."/>
            <person name="Okumura K."/>
            <person name="Nagase T."/>
            <person name="Nomura N."/>
            <person name="Kikuchi H."/>
            <person name="Masuho Y."/>
            <person name="Yamashita R."/>
            <person name="Nakai K."/>
            <person name="Yada T."/>
            <person name="Nakamura Y."/>
            <person name="Ohara O."/>
            <person name="Isogai T."/>
            <person name="Sugano S."/>
        </authorList>
    </citation>
    <scope>NUCLEOTIDE SEQUENCE [LARGE SCALE MRNA] (ISOFORM 1)</scope>
    <source>
        <tissue>Uterus</tissue>
    </source>
</reference>
<reference key="5">
    <citation type="submission" date="2005-07" db="EMBL/GenBank/DDBJ databases">
        <authorList>
            <person name="Mural R.J."/>
            <person name="Istrail S."/>
            <person name="Sutton G.G."/>
            <person name="Florea L."/>
            <person name="Halpern A.L."/>
            <person name="Mobarry C.M."/>
            <person name="Lippert R."/>
            <person name="Walenz B."/>
            <person name="Shatkay H."/>
            <person name="Dew I."/>
            <person name="Miller J.R."/>
            <person name="Flanigan M.J."/>
            <person name="Edwards N.J."/>
            <person name="Bolanos R."/>
            <person name="Fasulo D."/>
            <person name="Halldorsson B.V."/>
            <person name="Hannenhalli S."/>
            <person name="Turner R."/>
            <person name="Yooseph S."/>
            <person name="Lu F."/>
            <person name="Nusskern D.R."/>
            <person name="Shue B.C."/>
            <person name="Zheng X.H."/>
            <person name="Zhong F."/>
            <person name="Delcher A.L."/>
            <person name="Huson D.H."/>
            <person name="Kravitz S.A."/>
            <person name="Mouchard L."/>
            <person name="Reinert K."/>
            <person name="Remington K.A."/>
            <person name="Clark A.G."/>
            <person name="Waterman M.S."/>
            <person name="Eichler E.E."/>
            <person name="Adams M.D."/>
            <person name="Hunkapiller M.W."/>
            <person name="Myers E.W."/>
            <person name="Venter J.C."/>
        </authorList>
    </citation>
    <scope>NUCLEOTIDE SEQUENCE [LARGE SCALE GENOMIC DNA]</scope>
</reference>
<reference key="6">
    <citation type="journal article" date="2004" name="Genome Res.">
        <title>The status, quality, and expansion of the NIH full-length cDNA project: the Mammalian Gene Collection (MGC).</title>
        <authorList>
            <consortium name="The MGC Project Team"/>
        </authorList>
    </citation>
    <scope>NUCLEOTIDE SEQUENCE [LARGE SCALE MRNA] (ISOFORMS 1 AND 2)</scope>
    <source>
        <tissue>Brain</tissue>
        <tissue>Pancreas</tissue>
    </source>
</reference>
<reference key="7">
    <citation type="submission" date="2008-12" db="UniProtKB">
        <authorList>
            <person name="Lubec G."/>
            <person name="Chen W.-Q."/>
            <person name="Sun Y."/>
        </authorList>
    </citation>
    <scope>PROTEIN SEQUENCE OF 10-25; 33-58; 64-72; 79-109 AND 124-144</scope>
    <source>
        <tissue>Fetal brain cortex</tissue>
    </source>
</reference>
<reference key="8">
    <citation type="journal article" date="2009" name="Science">
        <title>Lysine acetylation targets protein complexes and co-regulates major cellular functions.</title>
        <authorList>
            <person name="Choudhary C."/>
            <person name="Kumar C."/>
            <person name="Gnad F."/>
            <person name="Nielsen M.L."/>
            <person name="Rehman M."/>
            <person name="Walther T.C."/>
            <person name="Olsen J.V."/>
            <person name="Mann M."/>
        </authorList>
    </citation>
    <scope>ACETYLATION [LARGE SCALE ANALYSIS] AT LYS-85; LYS-95; LYS-117 AND LYS-149</scope>
    <scope>IDENTIFICATION BY MASS SPECTROMETRY [LARGE SCALE ANALYSIS]</scope>
</reference>
<reference key="9">
    <citation type="journal article" date="2011" name="BMC Syst. Biol.">
        <title>Initial characterization of the human central proteome.</title>
        <authorList>
            <person name="Burkard T.R."/>
            <person name="Planyavsky M."/>
            <person name="Kaupe I."/>
            <person name="Breitwieser F.P."/>
            <person name="Buerckstuemmer T."/>
            <person name="Bennett K.L."/>
            <person name="Superti-Furga G."/>
            <person name="Colinge J."/>
        </authorList>
    </citation>
    <scope>IDENTIFICATION BY MASS SPECTROMETRY [LARGE SCALE ANALYSIS]</scope>
</reference>
<reference key="10">
    <citation type="journal article" date="2014" name="J. Proteomics">
        <title>An enzyme assisted RP-RPLC approach for in-depth analysis of human liver phosphoproteome.</title>
        <authorList>
            <person name="Bian Y."/>
            <person name="Song C."/>
            <person name="Cheng K."/>
            <person name="Dong M."/>
            <person name="Wang F."/>
            <person name="Huang J."/>
            <person name="Sun D."/>
            <person name="Wang L."/>
            <person name="Ye M."/>
            <person name="Zou H."/>
        </authorList>
    </citation>
    <scope>IDENTIFICATION BY MASS SPECTROMETRY [LARGE SCALE ANALYSIS]</scope>
    <source>
        <tissue>Liver</tissue>
    </source>
</reference>
<reference key="11">
    <citation type="journal article" date="2015" name="Proteomics">
        <title>N-terminome analysis of the human mitochondrial proteome.</title>
        <authorList>
            <person name="Vaca Jacome A.S."/>
            <person name="Rabilloud T."/>
            <person name="Schaeffer-Reiss C."/>
            <person name="Rompais M."/>
            <person name="Ayoub D."/>
            <person name="Lane L."/>
            <person name="Bairoch A."/>
            <person name="Van Dorsselaer A."/>
            <person name="Carapito C."/>
        </authorList>
    </citation>
    <scope>ACETYLATION [LARGE SCALE ANALYSIS] AT ALA-2</scope>
    <scope>CLEAVAGE OF INITIATOR METHIONINE [LARGE SCALE ANALYSIS]</scope>
    <scope>IDENTIFICATION BY MASS SPECTROMETRY [LARGE SCALE ANALYSIS]</scope>
</reference>
<reference evidence="10 11 12 13 14 15 16 17 18 19 20" key="12">
    <citation type="journal article" date="2023" name="Mol. Cell">
        <title>Structure of the human ATP synthase.</title>
        <authorList>
            <person name="Lai Y."/>
            <person name="Zhang Y."/>
            <person name="Zhou S."/>
            <person name="Xu J."/>
            <person name="Du Z."/>
            <person name="Feng Z."/>
            <person name="Yu L."/>
            <person name="Zhao Z."/>
            <person name="Wang W."/>
            <person name="Tang Y."/>
            <person name="Yang X."/>
            <person name="Guddat L.W."/>
            <person name="Liu F."/>
            <person name="Gao Y."/>
            <person name="Rao Z."/>
            <person name="Gong H."/>
        </authorList>
    </citation>
    <scope>STRUCTURE BY ELECTRON MICROSCOPY (2.53 ANGSTROMS) OF 2-161</scope>
    <scope>IDENTIFICATION IN THE ATP SYNTHASE COMPLEX</scope>
    <scope>FUNCTION</scope>
    <scope>SUBUNIT</scope>
</reference>